<feature type="chain" id="PRO_0000461704" description="tRNA-acetylating toxin 3">
    <location>
        <begin position="1"/>
        <end position="175"/>
    </location>
</feature>
<feature type="active site" evidence="9">
    <location>
        <position position="143"/>
    </location>
</feature>
<feature type="binding site" evidence="2 12 14">
    <location>
        <position position="95"/>
    </location>
    <ligand>
        <name>acetyl-CoA</name>
        <dbReference type="ChEBI" id="CHEBI:57288"/>
    </ligand>
</feature>
<feature type="binding site" evidence="2 12 13 14">
    <location>
        <position position="97"/>
    </location>
    <ligand>
        <name>acetyl-CoA</name>
        <dbReference type="ChEBI" id="CHEBI:57288"/>
    </ligand>
</feature>
<feature type="binding site" evidence="12 13 14">
    <location>
        <position position="103"/>
    </location>
    <ligand>
        <name>acetyl-CoA</name>
        <dbReference type="ChEBI" id="CHEBI:57288"/>
    </ligand>
</feature>
<feature type="binding site" evidence="2 12 13 14">
    <location>
        <position position="105"/>
    </location>
    <ligand>
        <name>acetyl-CoA</name>
        <dbReference type="ChEBI" id="CHEBI:57288"/>
    </ligand>
</feature>
<feature type="binding site" evidence="2 12 13 14">
    <location>
        <position position="107"/>
    </location>
    <ligand>
        <name>acetyl-CoA</name>
        <dbReference type="ChEBI" id="CHEBI:57288"/>
    </ligand>
</feature>
<feature type="binding site" evidence="2 12 14">
    <location>
        <position position="108"/>
    </location>
    <ligand>
        <name>acetyl-CoA</name>
        <dbReference type="ChEBI" id="CHEBI:57288"/>
    </ligand>
</feature>
<feature type="binding site" evidence="14">
    <location>
        <position position="133"/>
    </location>
    <ligand>
        <name>acetyl-CoA</name>
        <dbReference type="ChEBI" id="CHEBI:57288"/>
    </ligand>
</feature>
<feature type="binding site" evidence="13">
    <location>
        <position position="138"/>
    </location>
    <ligand>
        <name>acetyl-CoA</name>
        <dbReference type="ChEBI" id="CHEBI:57288"/>
    </ligand>
</feature>
<feature type="binding site" evidence="13">
    <location>
        <position position="141"/>
    </location>
    <ligand>
        <name>acetyl-CoA</name>
        <dbReference type="ChEBI" id="CHEBI:57288"/>
    </ligand>
</feature>
<feature type="binding site" evidence="2 12 13 14">
    <location>
        <position position="142"/>
    </location>
    <ligand>
        <name>acetyl-CoA</name>
        <dbReference type="ChEBI" id="CHEBI:57288"/>
    </ligand>
</feature>
<feature type="binding site" evidence="2 12">
    <location>
        <position position="145"/>
    </location>
    <ligand>
        <name>acetyl-CoA</name>
        <dbReference type="ChEBI" id="CHEBI:57288"/>
    </ligand>
</feature>
<feature type="binding site" evidence="12">
    <location>
        <position position="146"/>
    </location>
    <ligand>
        <name>acetyl-CoA</name>
        <dbReference type="ChEBI" id="CHEBI:57288"/>
    </ligand>
</feature>
<feature type="mutagenesis site" description="Decreased autorepression by TacA3-TacT3; when associated with 'A-37' in TacA3." evidence="5">
    <original>R</original>
    <variation>A</variation>
    <variation>E</variation>
    <location>
        <position position="33"/>
    </location>
</feature>
<feature type="mutagenesis site" description="Alters dimerization, no longer able to form octomeric complex with promoter DNA, does not derepress operon at high TacT3 levels, probably does not form the elongated dimer." evidence="3">
    <original>ISKGLGR</original>
    <variation>ASKGAGA</variation>
    <location>
        <begin position="78"/>
        <end position="84"/>
    </location>
</feature>
<feature type="mutagenesis site" description="54% toxicity in E.coli. Loss of tRNA-binding; when associated with F-143." evidence="3">
    <original>K</original>
    <variation>E</variation>
    <location>
        <position position="80"/>
    </location>
</feature>
<feature type="mutagenesis site" description="6% toxicity in E.coli. Loss of tRNA-binding; when associated with F-143." evidence="3">
    <original>R</original>
    <variation>E</variation>
    <location>
        <position position="84"/>
    </location>
</feature>
<feature type="mutagenesis site" description="Loss of toxicity." evidence="2">
    <original>R</original>
    <variation>E</variation>
    <location>
        <position position="94"/>
    </location>
</feature>
<feature type="mutagenesis site" description="Loss of toxicity. Reduced tRNA-binding. Loss of tRNA-binding; when associated with E-80 or E-84." evidence="2 3">
    <original>Y</original>
    <variation>F</variation>
    <location>
        <position position="143"/>
    </location>
</feature>
<feature type="mutagenesis site" description="82% toxic in E.coli, only 28% neutralized by cognate TacA3." evidence="3">
    <location>
        <begin position="163"/>
        <end position="175"/>
    </location>
</feature>
<feature type="mutagenesis site" description="91% toxic in E.coli, only 34% neutralized by cognate TacA3." evidence="3">
    <location>
        <begin position="164"/>
        <end position="175"/>
    </location>
</feature>
<feature type="mutagenesis site" description="98% toxic in E.coli, 75% neutralized by cognate TacA3." evidence="3">
    <location>
        <begin position="169"/>
        <end position="175"/>
    </location>
</feature>
<feature type="strand" evidence="15">
    <location>
        <begin position="6"/>
        <end position="10"/>
    </location>
</feature>
<feature type="strand" evidence="15">
    <location>
        <begin position="15"/>
        <end position="19"/>
    </location>
</feature>
<feature type="helix" evidence="15">
    <location>
        <begin position="25"/>
        <end position="33"/>
    </location>
</feature>
<feature type="helix" evidence="15">
    <location>
        <begin position="35"/>
        <end position="41"/>
    </location>
</feature>
<feature type="strand" evidence="15">
    <location>
        <begin position="45"/>
        <end position="51"/>
    </location>
</feature>
<feature type="strand" evidence="15">
    <location>
        <begin position="54"/>
        <end position="70"/>
    </location>
</feature>
<feature type="helix" evidence="15">
    <location>
        <begin position="71"/>
        <end position="73"/>
    </location>
</feature>
<feature type="turn" evidence="16">
    <location>
        <begin position="75"/>
        <end position="77"/>
    </location>
</feature>
<feature type="strand" evidence="15">
    <location>
        <begin position="80"/>
        <end position="83"/>
    </location>
</feature>
<feature type="strand" evidence="15">
    <location>
        <begin position="86"/>
        <end position="97"/>
    </location>
</feature>
<feature type="helix" evidence="15">
    <location>
        <begin position="99"/>
        <end position="101"/>
    </location>
</feature>
<feature type="helix" evidence="15">
    <location>
        <begin position="106"/>
        <end position="125"/>
    </location>
</feature>
<feature type="strand" evidence="15">
    <location>
        <begin position="129"/>
        <end position="133"/>
    </location>
</feature>
<feature type="helix" evidence="15">
    <location>
        <begin position="137"/>
        <end position="144"/>
    </location>
</feature>
<feature type="turn" evidence="15">
    <location>
        <begin position="145"/>
        <end position="147"/>
    </location>
</feature>
<feature type="strand" evidence="15">
    <location>
        <begin position="149"/>
        <end position="151"/>
    </location>
</feature>
<feature type="strand" evidence="15">
    <location>
        <begin position="154"/>
        <end position="161"/>
    </location>
</feature>
<feature type="helix" evidence="15">
    <location>
        <begin position="162"/>
        <end position="171"/>
    </location>
</feature>
<gene>
    <name evidence="7" type="primary">tacT3</name>
    <name evidence="6" type="synonym">a6</name>
    <name evidence="11" type="ordered locus">STM14_3506</name>
</gene>
<accession>A0A0F6B5X4</accession>
<reference evidence="11" key="1">
    <citation type="journal article" date="2010" name="J. Bacteriol.">
        <title>Short-term signatures of evolutionary change in the Salmonella enterica serovar typhimurium 14028 genome.</title>
        <authorList>
            <person name="Jarvik T."/>
            <person name="Smillie C."/>
            <person name="Groisman E.A."/>
            <person name="Ochman H."/>
        </authorList>
    </citation>
    <scope>NUCLEOTIDE SEQUENCE [LARGE SCALE GENOMIC DNA]</scope>
    <source>
        <strain>14028s / SGSC 2262</strain>
    </source>
</reference>
<reference key="2">
    <citation type="journal article" date="2014" name="Science">
        <title>Internalization of Salmonella by macrophages induces formation of nonreplicating persisters.</title>
        <authorList>
            <person name="Helaine S."/>
            <person name="Cheverton A.M."/>
            <person name="Watson K.G."/>
            <person name="Faure L.M."/>
            <person name="Matthews S.A."/>
            <person name="Holden D.W."/>
        </authorList>
    </citation>
    <scope>OPERON FUNCTION IN PERSISTER CELL FORMATION</scope>
    <scope>INDUCTION IN HOST MACROPHAGES</scope>
    <scope>DISRUPTION PHENOTYPE</scope>
    <source>
        <strain>14028s / SGSC 2262</strain>
    </source>
</reference>
<reference key="3">
    <citation type="journal article" date="2022" name="Nucleic Acids Res.">
        <title>GNAT toxins evolve toward narrow tRNA target specificities.</title>
        <authorList>
            <person name="Bikmetov D."/>
            <person name="Hall A.M.J."/>
            <person name="Livenskyi A."/>
            <person name="Gollan B."/>
            <person name="Ovchinnikov S."/>
            <person name="Gilep K."/>
            <person name="Kim J.Y."/>
            <person name="Larrouy-Maumus G."/>
            <person name="Zgoda V."/>
            <person name="Borukhov S."/>
            <person name="Severinov K."/>
            <person name="Helaine S."/>
            <person name="Dubiley S."/>
        </authorList>
    </citation>
    <scope>FUNCTION</scope>
    <scope>CATALYTIC ACTIVITY</scope>
    <scope>SUBSTRATE SPECIFICITY</scope>
    <source>
        <strain>ATCC 14028 / SGSC 2980 / CDC 6516-60 / NCTC 12023</strain>
    </source>
</reference>
<reference evidence="12" key="4">
    <citation type="journal article" date="2018" name="Nat. Commun.">
        <title>Activity of acetyltransferase toxins involved in Salmonella persister formation during macrophage infection.</title>
        <authorList>
            <person name="Rycroft J.A."/>
            <person name="Gollan B."/>
            <person name="Grabe G.J."/>
            <person name="Hall A."/>
            <person name="Cheverton A.M."/>
            <person name="Larrouy-Maumus G."/>
            <person name="Hare S.A."/>
            <person name="Helaine S."/>
        </authorList>
    </citation>
    <scope>X-RAY CRYSTALLOGRAPHY (1.48 ANGSTROMS) OF 2-175 IN COMPLEX WITH ACETYL-COA</scope>
    <scope>FUNCTION AS A TOXIN</scope>
    <scope>POSSIBLE ACTIVE SITE</scope>
    <scope>SUBUNIT</scope>
    <scope>DISRUPTION PHENOTYPE</scope>
    <scope>MUTAGENESIS OF ARG-94 AND TYR-143</scope>
    <source>
        <strain>14028s / SGSC 2262</strain>
    </source>
</reference>
<reference evidence="13" key="5">
    <citation type="journal article" date="2021" name="Nat. Chem. Biol.">
        <title>Auxiliary interfaces support the evolution of specific toxin-antitoxin pairing.</title>
        <authorList>
            <person name="Grabe G.J."/>
            <person name="Giorgio R.T."/>
            <person name="Hall A.M.J."/>
            <person name="Morgan R.M.L."/>
            <person name="Dubois L."/>
            <person name="Sisley T.A."/>
            <person name="Rycroft J.A."/>
            <person name="Hare S.A."/>
            <person name="Helaine S."/>
        </authorList>
    </citation>
    <scope>X-RAY CRYSTALLOGRAPHY (2.55 ANGSTROMS) OF 2-175 IN COMPLEX WITH ANTITOXIN DOMAIN AND DEPHOSPHO-ACETYL-COA</scope>
    <scope>FUNCTION AS A TOXIN</scope>
    <scope>SUBUNIT</scope>
    <scope>DOMAIN</scope>
    <scope>MUTAGENESIS OF 78-ILE--ARG-84; LYS-80; ARG-84; TYR-143; 163-LYS--LEU-175; 164-THR--LEU-175 AND 169-LEU--LEU-175</scope>
    <scope>TRNA-BINDING</scope>
    <source>
        <strain>14028s / SGSC 2262</strain>
    </source>
</reference>
<reference evidence="14" key="6">
    <citation type="journal article" date="2024" name="Nat. Struct. Mol. Biol.">
        <title>Molecular stripping underpins derepression of a toxin-antitoxin system.</title>
        <authorList>
            <person name="Grabe G.J."/>
            <person name="Giorgio R.T."/>
            <person name="Wieczor M."/>
            <person name="Gollan B."/>
            <person name="Sargen M."/>
            <person name="Orozco M."/>
            <person name="Hare S.A."/>
            <person name="Helaine S."/>
        </authorList>
    </citation>
    <scope>X-RAY CRYSTALLOGRAPHY (2.00 ANGSTROMS) OF 2-175 IN COMPLEX WITH TACA3; DNA AND COA</scope>
    <scope>FUNCTION</scope>
    <scope>SUBUNIT</scope>
    <scope>INDUCTION</scope>
    <scope>MUTAGENESIS OF ARG-33</scope>
</reference>
<organism>
    <name type="scientific">Salmonella typhimurium (strain 14028s / SGSC 2262)</name>
    <dbReference type="NCBI Taxonomy" id="588858"/>
    <lineage>
        <taxon>Bacteria</taxon>
        <taxon>Pseudomonadati</taxon>
        <taxon>Pseudomonadota</taxon>
        <taxon>Gammaproteobacteria</taxon>
        <taxon>Enterobacterales</taxon>
        <taxon>Enterobacteriaceae</taxon>
        <taxon>Salmonella</taxon>
    </lineage>
</organism>
<dbReference type="EC" id="2.3.1.-" evidence="9"/>
<dbReference type="EMBL" id="CP001363">
    <property type="protein sequence ID" value="ACY89920.1"/>
    <property type="molecule type" value="Genomic_DNA"/>
</dbReference>
<dbReference type="RefSeq" id="WP_000971655.1">
    <property type="nucleotide sequence ID" value="NZ_CP043402.1"/>
</dbReference>
<dbReference type="PDB" id="6G96">
    <property type="method" value="X-ray"/>
    <property type="resolution" value="1.48 A"/>
    <property type="chains" value="A/B=2-175"/>
</dbReference>
<dbReference type="PDB" id="7AK9">
    <property type="method" value="X-ray"/>
    <property type="resolution" value="2.55 A"/>
    <property type="chains" value="A/B=2-175"/>
</dbReference>
<dbReference type="PDB" id="7ZG5">
    <property type="method" value="X-ray"/>
    <property type="resolution" value="2.00 A"/>
    <property type="chains" value="A/B=2-175"/>
</dbReference>
<dbReference type="PDBsum" id="6G96"/>
<dbReference type="PDBsum" id="7AK9"/>
<dbReference type="PDBsum" id="7ZG5"/>
<dbReference type="SMR" id="A0A0F6B5X4"/>
<dbReference type="KEGG" id="seo:STM14_3506"/>
<dbReference type="PATRIC" id="fig|588858.6.peg.3223"/>
<dbReference type="HOGENOM" id="CLU_101288_3_1_6"/>
<dbReference type="BioCyc" id="SENT588858:STM14_RS15565-MONOMER"/>
<dbReference type="Proteomes" id="UP000002695">
    <property type="component" value="Chromosome"/>
</dbReference>
<dbReference type="GO" id="GO:0016747">
    <property type="term" value="F:acyltransferase activity, transferring groups other than amino-acyl groups"/>
    <property type="evidence" value="ECO:0007669"/>
    <property type="project" value="InterPro"/>
</dbReference>
<dbReference type="GO" id="GO:0000049">
    <property type="term" value="F:tRNA binding"/>
    <property type="evidence" value="ECO:0007669"/>
    <property type="project" value="UniProtKB-KW"/>
</dbReference>
<dbReference type="CDD" id="cd04301">
    <property type="entry name" value="NAT_SF"/>
    <property type="match status" value="1"/>
</dbReference>
<dbReference type="Gene3D" id="3.40.630.30">
    <property type="match status" value="1"/>
</dbReference>
<dbReference type="InterPro" id="IPR016181">
    <property type="entry name" value="Acyl_CoA_acyltransferase"/>
</dbReference>
<dbReference type="InterPro" id="IPR000182">
    <property type="entry name" value="GNAT_dom"/>
</dbReference>
<dbReference type="PANTHER" id="PTHR36449:SF1">
    <property type="entry name" value="ACETYLTRANSFERASE"/>
    <property type="match status" value="1"/>
</dbReference>
<dbReference type="PANTHER" id="PTHR36449">
    <property type="entry name" value="ACETYLTRANSFERASE-RELATED"/>
    <property type="match status" value="1"/>
</dbReference>
<dbReference type="Pfam" id="PF00583">
    <property type="entry name" value="Acetyltransf_1"/>
    <property type="match status" value="1"/>
</dbReference>
<dbReference type="SUPFAM" id="SSF55729">
    <property type="entry name" value="Acyl-CoA N-acyltransferases (Nat)"/>
    <property type="match status" value="1"/>
</dbReference>
<comment type="function">
    <text evidence="1 2 3 4">Toxic component of a type II toxin-antitoxin (TA) system (PubMed:29777131, PubMed:34556858). Acetylates tRNA and inhibits translation (PubMed:29777131). Acetylates only Gly-tRNA on all 3 Gly-tRNA(Gly) isoacceptors in situ (PubMed:35609997). In vitro acetylates mainly Ile/Leu and Gly (PubMed:29777131). Overexpression during the lag phase of a tacA3-tacT3 deletion strain leads to a 150-fold increase in persister cells in the presence of cefotaxime and a non-growth state in the absence of antibiotic (PubMed:29777131). Persister cell formation and the growth defect are neutralized by cognate antitoxin TacA3, but not by TacA1 or TacA2 (PubMed:29777131, PubMed:34556858). Plays a role in persister cell formation (PubMed:24408438).</text>
</comment>
<comment type="function">
    <text evidence="5 10">The TacA3-TacT3 complex both represses and derepresses expression of its own operon (PubMed:38538913). The hexameric 4:2 TacA3-TacT3 complex binds promoter DNA and represses its transcription; both subunits are required (PubMed:38538913). The octomeric 4:4 TacA3-TacT3 complex derepresses the operon (PubMed:38538913). The shift from hexameric to octomeric complex probably alters DNA-binding, leading to dissociation from the operator DNA and derepression (Probable) (PubMed:38538913).</text>
</comment>
<comment type="catalytic activity">
    <reaction evidence="2 4">
        <text>glycyl-tRNA(Gly) + acetyl-CoA = N-acetylglycyl-tRNA(Gly) + CoA + H(+)</text>
        <dbReference type="Rhea" id="RHEA:81867"/>
        <dbReference type="Rhea" id="RHEA-COMP:9683"/>
        <dbReference type="Rhea" id="RHEA-COMP:19766"/>
        <dbReference type="ChEBI" id="CHEBI:15378"/>
        <dbReference type="ChEBI" id="CHEBI:57287"/>
        <dbReference type="ChEBI" id="CHEBI:57288"/>
        <dbReference type="ChEBI" id="CHEBI:78522"/>
        <dbReference type="ChEBI" id="CHEBI:232036"/>
    </reaction>
</comment>
<comment type="subunit">
    <text evidence="2 3 5 10">Homodimer (in absence of antitoxin); has a condensed and elongated form (PubMed:29777131, PubMed:38538913). Forms a complex with cognate antitoxin TacA3 (PubMed:29777131). Forms a 4:2 antitoxin:toxin complex with cognate antitoxin TacA3 (PubMed:34556858). Forms a 4:4 antitoxin:toxin complex with promoter DNA, where 2 TacT3 dimers bridge 2 TacA3 dimers (PubMed:38538913). Only TacA3 contacts promoter DNA in the octomeric form (PubMed:38538913). TacT3 may contact DNA in the hexameric form (Probable) (PubMed:38538913).</text>
</comment>
<comment type="induction">
    <text evidence="1 5">TacA3-TacT3 autorepresses its transcription at low TacT3 concentrations, at higher TacT3 levels it derepresses transcription (PubMed:38538913). The tacA3-tacT3 operon is up-regulated 5-fold in a relA-spoT-dependent manner within 30 minutes of phagocytosis by mouse bone marrow-derived macrophages (PubMed:24408438).</text>
</comment>
<comment type="domain">
    <text evidence="3">The C-terminus is an important element for recognition by the cognate antitoxin.</text>
</comment>
<comment type="disruption phenotype">
    <text evidence="1 2">Deleting the operon causes 50% reduction in persister cell formation in mouse bone marrow-derived macrophages (PubMed:24408438). All 3 tacA-tacT operons can be deleted without an effect on growth in cell culture (PubMed:29777131).</text>
</comment>
<comment type="similarity">
    <text evidence="8">Belongs to the acetyltransferase family. GNAT subfamily.</text>
</comment>
<protein>
    <recommendedName>
        <fullName evidence="8">tRNA-acetylating toxin 3</fullName>
        <shortName evidence="7">TacT3</shortName>
        <ecNumber evidence="9">2.3.1.-</ecNumber>
    </recommendedName>
    <alternativeName>
        <fullName evidence="6">Toxin A6</fullName>
    </alternativeName>
</protein>
<proteinExistence type="evidence at protein level"/>
<name>TACT3_SALT1</name>
<sequence>MMFTDWHEAAIGKTHNRMNFDCGDADLNQFLQRHARQNHEKGTTKTYVALDNSDVTRIHGFYSVSPASLIYAQVPGAISKGLGRYDVPVFRLGRLAVDKSMQGQGLGAQLLLSAGKRCIQAALQVGGVALLIDAKNKQVCDWYKGFGAVPLNDQPLSLLLSFKTLYAALSASGRL</sequence>
<evidence type="ECO:0000269" key="1">
    <source>
    </source>
</evidence>
<evidence type="ECO:0000269" key="2">
    <source>
    </source>
</evidence>
<evidence type="ECO:0000269" key="3">
    <source>
    </source>
</evidence>
<evidence type="ECO:0000269" key="4">
    <source>
    </source>
</evidence>
<evidence type="ECO:0000269" key="5">
    <source>
    </source>
</evidence>
<evidence type="ECO:0000303" key="6">
    <source>
    </source>
</evidence>
<evidence type="ECO:0000303" key="7">
    <source>
    </source>
</evidence>
<evidence type="ECO:0000305" key="8"/>
<evidence type="ECO:0000305" key="9">
    <source>
    </source>
</evidence>
<evidence type="ECO:0000305" key="10">
    <source>
    </source>
</evidence>
<evidence type="ECO:0000312" key="11">
    <source>
        <dbReference type="EMBL" id="ACY89920.1"/>
    </source>
</evidence>
<evidence type="ECO:0007744" key="12">
    <source>
        <dbReference type="PDB" id="6G96"/>
    </source>
</evidence>
<evidence type="ECO:0007744" key="13">
    <source>
        <dbReference type="PDB" id="7AK9"/>
    </source>
</evidence>
<evidence type="ECO:0007744" key="14">
    <source>
        <dbReference type="PDB" id="7ZG5"/>
    </source>
</evidence>
<evidence type="ECO:0007829" key="15">
    <source>
        <dbReference type="PDB" id="6G96"/>
    </source>
</evidence>
<evidence type="ECO:0007829" key="16">
    <source>
        <dbReference type="PDB" id="7ZG5"/>
    </source>
</evidence>
<keyword id="KW-0002">3D-structure</keyword>
<keyword id="KW-0012">Acyltransferase</keyword>
<keyword id="KW-0678">Repressor</keyword>
<keyword id="KW-0694">RNA-binding</keyword>
<keyword id="KW-1277">Toxin-antitoxin system</keyword>
<keyword id="KW-0804">Transcription</keyword>
<keyword id="KW-0805">Transcription regulation</keyword>
<keyword id="KW-0808">Transferase</keyword>
<keyword id="KW-0820">tRNA-binding</keyword>